<protein>
    <recommendedName>
        <fullName>Olfactory receptor 11H6</fullName>
    </recommendedName>
    <alternativeName>
        <fullName>Olfactory receptor OR14-35</fullName>
    </alternativeName>
</protein>
<feature type="chain" id="PRO_0000150726" description="Olfactory receptor 11H6">
    <location>
        <begin position="1"/>
        <end position="330"/>
    </location>
</feature>
<feature type="topological domain" description="Extracellular" evidence="1">
    <location>
        <begin position="1"/>
        <end position="43"/>
    </location>
</feature>
<feature type="transmembrane region" description="Helical; Name=1" evidence="1">
    <location>
        <begin position="44"/>
        <end position="64"/>
    </location>
</feature>
<feature type="topological domain" description="Cytoplasmic" evidence="1">
    <location>
        <begin position="65"/>
        <end position="72"/>
    </location>
</feature>
<feature type="transmembrane region" description="Helical; Name=2" evidence="1">
    <location>
        <begin position="73"/>
        <end position="93"/>
    </location>
</feature>
<feature type="topological domain" description="Extracellular" evidence="1">
    <location>
        <begin position="94"/>
        <end position="117"/>
    </location>
</feature>
<feature type="transmembrane region" description="Helical; Name=3" evidence="1">
    <location>
        <begin position="118"/>
        <end position="138"/>
    </location>
</feature>
<feature type="topological domain" description="Cytoplasmic" evidence="1">
    <location>
        <begin position="139"/>
        <end position="157"/>
    </location>
</feature>
<feature type="transmembrane region" description="Helical; Name=4" evidence="1">
    <location>
        <begin position="158"/>
        <end position="178"/>
    </location>
</feature>
<feature type="topological domain" description="Extracellular" evidence="1">
    <location>
        <begin position="179"/>
        <end position="215"/>
    </location>
</feature>
<feature type="transmembrane region" description="Helical; Name=5" evidence="1">
    <location>
        <begin position="216"/>
        <end position="235"/>
    </location>
</feature>
<feature type="topological domain" description="Cytoplasmic" evidence="1">
    <location>
        <begin position="236"/>
        <end position="255"/>
    </location>
</feature>
<feature type="transmembrane region" description="Helical; Name=6" evidence="1">
    <location>
        <begin position="256"/>
        <end position="276"/>
    </location>
</feature>
<feature type="topological domain" description="Extracellular" evidence="1">
    <location>
        <begin position="277"/>
        <end position="289"/>
    </location>
</feature>
<feature type="transmembrane region" description="Helical; Name=7" evidence="1">
    <location>
        <begin position="290"/>
        <end position="310"/>
    </location>
</feature>
<feature type="topological domain" description="Cytoplasmic" evidence="1">
    <location>
        <begin position="311"/>
        <end position="330"/>
    </location>
</feature>
<feature type="glycosylation site" description="N-linked (GlcNAc...) asparagine" evidence="1">
    <location>
        <position position="21"/>
    </location>
</feature>
<feature type="disulfide bond" evidence="2">
    <location>
        <begin position="115"/>
        <end position="207"/>
    </location>
</feature>
<feature type="sequence variant" id="VAR_034299" description="In dbSNP:rs10140652.">
    <original>S</original>
    <variation>Y</variation>
    <location>
        <position position="7"/>
    </location>
</feature>
<feature type="sequence variant" id="VAR_024130" description="In dbSNP:rs9323693.">
    <original>L</original>
    <variation>V</variation>
    <location>
        <position position="32"/>
    </location>
</feature>
<feature type="sequence variant" id="VAR_034300" description="In dbSNP:rs12891553.">
    <original>I</original>
    <variation>T</variation>
    <location>
        <position position="107"/>
    </location>
</feature>
<feature type="sequence variant" id="VAR_034301" description="In dbSNP:rs17106351.">
    <original>R</original>
    <variation>H</variation>
    <location>
        <position position="146"/>
    </location>
</feature>
<feature type="sequence variant" id="VAR_034302" description="In dbSNP:rs17211285.">
    <original>L</original>
    <variation>F</variation>
    <location>
        <position position="195"/>
    </location>
</feature>
<feature type="sequence variant" id="VAR_034303" description="In dbSNP:rs17277221.">
    <original>Y</original>
    <variation>H</variation>
    <location>
        <position position="236"/>
    </location>
</feature>
<feature type="sequence variant" id="VAR_034304" description="In dbSNP:rs17277228.">
    <original>C</original>
    <variation>R</variation>
    <location>
        <position position="259"/>
    </location>
</feature>
<keyword id="KW-1003">Cell membrane</keyword>
<keyword id="KW-1015">Disulfide bond</keyword>
<keyword id="KW-0297">G-protein coupled receptor</keyword>
<keyword id="KW-0325">Glycoprotein</keyword>
<keyword id="KW-0472">Membrane</keyword>
<keyword id="KW-0552">Olfaction</keyword>
<keyword id="KW-0675">Receptor</keyword>
<keyword id="KW-1185">Reference proteome</keyword>
<keyword id="KW-0716">Sensory transduction</keyword>
<keyword id="KW-0807">Transducer</keyword>
<keyword id="KW-0812">Transmembrane</keyword>
<keyword id="KW-1133">Transmembrane helix</keyword>
<sequence>MFFIIHSLVTSVFLTALGPQNRTMHFVTEFVLLGFHGQREMQSCFFSFILVLYLLTLLGNGAIVCAVKLDRRLHTPMYILLGNFAFLEIWYISSTVPNMLVNILSEIKTISFSGCFLQFYFFFSLGTTECFFLSVMAYDRYLAICRPLHYPSIMTGKFCIILVCVCWVGGFLCYPVPIVLISQLPFCGPNIIDHLVCDPGPLFALACISAPSTELICYTFNSMIIFGPFLSILGSYTLVIRAVLCIPSGAGRTKAFSTCGSHLMVVSLFYGTLMVMYVSPTSGNPAGMQKIITLVYTAMTPFLNPLIYSLRNKDMKDALKRVLGLTVSQN</sequence>
<proteinExistence type="inferred from homology"/>
<organism>
    <name type="scientific">Homo sapiens</name>
    <name type="common">Human</name>
    <dbReference type="NCBI Taxonomy" id="9606"/>
    <lineage>
        <taxon>Eukaryota</taxon>
        <taxon>Metazoa</taxon>
        <taxon>Chordata</taxon>
        <taxon>Craniata</taxon>
        <taxon>Vertebrata</taxon>
        <taxon>Euteleostomi</taxon>
        <taxon>Mammalia</taxon>
        <taxon>Eutheria</taxon>
        <taxon>Euarchontoglires</taxon>
        <taxon>Primates</taxon>
        <taxon>Haplorrhini</taxon>
        <taxon>Catarrhini</taxon>
        <taxon>Hominidae</taxon>
        <taxon>Homo</taxon>
    </lineage>
</organism>
<reference key="1">
    <citation type="submission" date="2001-07" db="EMBL/GenBank/DDBJ databases">
        <title>Genome-wide discovery and analysis of human seven transmembrane helix receptor genes.</title>
        <authorList>
            <person name="Suwa M."/>
            <person name="Sato T."/>
            <person name="Okouchi I."/>
            <person name="Arita M."/>
            <person name="Futami K."/>
            <person name="Matsumoto S."/>
            <person name="Tsutsumi S."/>
            <person name="Aburatani H."/>
            <person name="Asai K."/>
            <person name="Akiyama Y."/>
        </authorList>
    </citation>
    <scope>NUCLEOTIDE SEQUENCE [GENOMIC DNA]</scope>
</reference>
<reference key="2">
    <citation type="journal article" date="2004" name="Proc. Natl. Acad. Sci. U.S.A.">
        <title>The human olfactory receptor gene family.</title>
        <authorList>
            <person name="Malnic B."/>
            <person name="Godfrey P.A."/>
            <person name="Buck L.B."/>
        </authorList>
    </citation>
    <scope>IDENTIFICATION</scope>
</reference>
<reference key="3">
    <citation type="journal article" date="2004" name="Proc. Natl. Acad. Sci. U.S.A.">
        <authorList>
            <person name="Malnic B."/>
            <person name="Godfrey P.A."/>
            <person name="Buck L.B."/>
        </authorList>
    </citation>
    <scope>ERRATUM OF PUBMED:14983052</scope>
</reference>
<accession>Q8NGC7</accession>
<accession>Q6IF08</accession>
<name>O11H6_HUMAN</name>
<comment type="function">
    <text evidence="3">Odorant receptor.</text>
</comment>
<comment type="subcellular location">
    <subcellularLocation>
        <location>Cell membrane</location>
        <topology>Multi-pass membrane protein</topology>
    </subcellularLocation>
</comment>
<comment type="similarity">
    <text evidence="2">Belongs to the G-protein coupled receptor 1 family.</text>
</comment>
<comment type="online information" name="Human Olfactory Receptor Data Exploratorium (HORDE)">
    <link uri="http://genome.weizmann.ac.il/horde/card/index/symbol:OR11H6"/>
</comment>
<gene>
    <name type="primary">OR11H6</name>
</gene>
<evidence type="ECO:0000255" key="1"/>
<evidence type="ECO:0000255" key="2">
    <source>
        <dbReference type="PROSITE-ProRule" id="PRU00521"/>
    </source>
</evidence>
<evidence type="ECO:0000305" key="3"/>
<dbReference type="EMBL" id="AB065889">
    <property type="protein sequence ID" value="BAC06106.1"/>
    <property type="molecule type" value="Genomic_DNA"/>
</dbReference>
<dbReference type="EMBL" id="BK004454">
    <property type="protein sequence ID" value="DAA04852.1"/>
    <property type="molecule type" value="Genomic_DNA"/>
</dbReference>
<dbReference type="CCDS" id="CCDS32033.1"/>
<dbReference type="RefSeq" id="NP_001004480.1">
    <property type="nucleotide sequence ID" value="NM_001004480.1"/>
</dbReference>
<dbReference type="SMR" id="Q8NGC7"/>
<dbReference type="FunCoup" id="Q8NGC7">
    <property type="interactions" value="469"/>
</dbReference>
<dbReference type="STRING" id="9606.ENSP00000319071"/>
<dbReference type="GlyCosmos" id="Q8NGC7">
    <property type="glycosylation" value="1 site, No reported glycans"/>
</dbReference>
<dbReference type="GlyGen" id="Q8NGC7">
    <property type="glycosylation" value="2 sites"/>
</dbReference>
<dbReference type="BioMuta" id="OR11H6"/>
<dbReference type="DMDM" id="38372668"/>
<dbReference type="MassIVE" id="Q8NGC7"/>
<dbReference type="PaxDb" id="9606-ENSP00000319071"/>
<dbReference type="PeptideAtlas" id="Q8NGC7"/>
<dbReference type="ProteomicsDB" id="73477"/>
<dbReference type="Antibodypedia" id="76906">
    <property type="antibodies" value="6 antibodies from 6 providers"/>
</dbReference>
<dbReference type="DNASU" id="122748"/>
<dbReference type="Ensembl" id="ENST00000315519.3">
    <property type="protein sequence ID" value="ENSP00000319071.2"/>
    <property type="gene ID" value="ENSG00000176219.3"/>
</dbReference>
<dbReference type="Ensembl" id="ENST00000708726.1">
    <property type="protein sequence ID" value="ENSP00000517306.1"/>
    <property type="gene ID" value="ENSG00000291779.1"/>
</dbReference>
<dbReference type="GeneID" id="122748"/>
<dbReference type="KEGG" id="hsa:122748"/>
<dbReference type="MANE-Select" id="ENST00000315519.3">
    <property type="protein sequence ID" value="ENSP00000319071.2"/>
    <property type="RefSeq nucleotide sequence ID" value="NM_001004480.1"/>
    <property type="RefSeq protein sequence ID" value="NP_001004480.1"/>
</dbReference>
<dbReference type="UCSC" id="uc010tlc.3">
    <property type="organism name" value="human"/>
</dbReference>
<dbReference type="AGR" id="HGNC:15349"/>
<dbReference type="CTD" id="122748"/>
<dbReference type="GeneCards" id="OR11H6"/>
<dbReference type="HGNC" id="HGNC:15349">
    <property type="gene designation" value="OR11H6"/>
</dbReference>
<dbReference type="HPA" id="ENSG00000176219">
    <property type="expression patterns" value="Not detected"/>
</dbReference>
<dbReference type="neXtProt" id="NX_Q8NGC7"/>
<dbReference type="PharmGKB" id="PA32018"/>
<dbReference type="VEuPathDB" id="HostDB:ENSG00000176219"/>
<dbReference type="eggNOG" id="ENOG502QVH7">
    <property type="taxonomic scope" value="Eukaryota"/>
</dbReference>
<dbReference type="GeneTree" id="ENSGT00940000154475"/>
<dbReference type="HOGENOM" id="CLU_012526_1_0_1"/>
<dbReference type="InParanoid" id="Q8NGC7"/>
<dbReference type="OMA" id="QREMQNF"/>
<dbReference type="OrthoDB" id="6144223at2759"/>
<dbReference type="PAN-GO" id="Q8NGC7">
    <property type="GO annotations" value="0 GO annotations based on evolutionary models"/>
</dbReference>
<dbReference type="PhylomeDB" id="Q8NGC7"/>
<dbReference type="TreeFam" id="TF338968"/>
<dbReference type="PathwayCommons" id="Q8NGC7"/>
<dbReference type="Reactome" id="R-HSA-381753">
    <property type="pathway name" value="Olfactory Signaling Pathway"/>
</dbReference>
<dbReference type="Reactome" id="R-HSA-9752946">
    <property type="pathway name" value="Expression and translocation of olfactory receptors"/>
</dbReference>
<dbReference type="BioGRID-ORCS" id="122748">
    <property type="hits" value="13 hits in 747 CRISPR screens"/>
</dbReference>
<dbReference type="GeneWiki" id="OR11H6"/>
<dbReference type="GenomeRNAi" id="122748"/>
<dbReference type="Pharos" id="Q8NGC7">
    <property type="development level" value="Tdark"/>
</dbReference>
<dbReference type="PRO" id="PR:Q8NGC7"/>
<dbReference type="Proteomes" id="UP000005640">
    <property type="component" value="Chromosome 14"/>
</dbReference>
<dbReference type="RNAct" id="Q8NGC7">
    <property type="molecule type" value="protein"/>
</dbReference>
<dbReference type="Bgee" id="ENSG00000176219">
    <property type="expression patterns" value="Expressed in sural nerve and 1 other cell type or tissue"/>
</dbReference>
<dbReference type="ExpressionAtlas" id="Q8NGC7">
    <property type="expression patterns" value="baseline and differential"/>
</dbReference>
<dbReference type="GO" id="GO:0005886">
    <property type="term" value="C:plasma membrane"/>
    <property type="evidence" value="ECO:0000304"/>
    <property type="project" value="Reactome"/>
</dbReference>
<dbReference type="GO" id="GO:0004930">
    <property type="term" value="F:G protein-coupled receptor activity"/>
    <property type="evidence" value="ECO:0007669"/>
    <property type="project" value="UniProtKB-KW"/>
</dbReference>
<dbReference type="GO" id="GO:0004984">
    <property type="term" value="F:olfactory receptor activity"/>
    <property type="evidence" value="ECO:0007669"/>
    <property type="project" value="InterPro"/>
</dbReference>
<dbReference type="CDD" id="cd15913">
    <property type="entry name" value="7tmA_OR11G-like"/>
    <property type="match status" value="1"/>
</dbReference>
<dbReference type="FunFam" id="1.20.1070.10:FF:000001">
    <property type="entry name" value="Olfactory receptor"/>
    <property type="match status" value="1"/>
</dbReference>
<dbReference type="Gene3D" id="1.20.1070.10">
    <property type="entry name" value="Rhodopsin 7-helix transmembrane proteins"/>
    <property type="match status" value="1"/>
</dbReference>
<dbReference type="InterPro" id="IPR000276">
    <property type="entry name" value="GPCR_Rhodpsn"/>
</dbReference>
<dbReference type="InterPro" id="IPR017452">
    <property type="entry name" value="GPCR_Rhodpsn_7TM"/>
</dbReference>
<dbReference type="InterPro" id="IPR000725">
    <property type="entry name" value="Olfact_rcpt"/>
</dbReference>
<dbReference type="InterPro" id="IPR050939">
    <property type="entry name" value="Olfactory_GPCR1"/>
</dbReference>
<dbReference type="PANTHER" id="PTHR24242">
    <property type="entry name" value="G-PROTEIN COUPLED RECEPTOR"/>
    <property type="match status" value="1"/>
</dbReference>
<dbReference type="PANTHER" id="PTHR24242:SF90">
    <property type="entry name" value="OLFACTORY RECEPTOR 11H6"/>
    <property type="match status" value="1"/>
</dbReference>
<dbReference type="Pfam" id="PF13853">
    <property type="entry name" value="7tm_4"/>
    <property type="match status" value="1"/>
</dbReference>
<dbReference type="PRINTS" id="PR00237">
    <property type="entry name" value="GPCRRHODOPSN"/>
</dbReference>
<dbReference type="PRINTS" id="PR00245">
    <property type="entry name" value="OLFACTORYR"/>
</dbReference>
<dbReference type="SUPFAM" id="SSF81321">
    <property type="entry name" value="Family A G protein-coupled receptor-like"/>
    <property type="match status" value="1"/>
</dbReference>
<dbReference type="PROSITE" id="PS00237">
    <property type="entry name" value="G_PROTEIN_RECEP_F1_1"/>
    <property type="match status" value="1"/>
</dbReference>
<dbReference type="PROSITE" id="PS50262">
    <property type="entry name" value="G_PROTEIN_RECEP_F1_2"/>
    <property type="match status" value="1"/>
</dbReference>